<reference key="1">
    <citation type="journal article" date="2008" name="Chem. Biol. Interact.">
        <title>Extending the Bacillus cereus group genomics to putative food-borne pathogens of different toxicity.</title>
        <authorList>
            <person name="Lapidus A."/>
            <person name="Goltsman E."/>
            <person name="Auger S."/>
            <person name="Galleron N."/>
            <person name="Segurens B."/>
            <person name="Dossat C."/>
            <person name="Land M.L."/>
            <person name="Broussolle V."/>
            <person name="Brillard J."/>
            <person name="Guinebretiere M.-H."/>
            <person name="Sanchis V."/>
            <person name="Nguen-the C."/>
            <person name="Lereclus D."/>
            <person name="Richardson P."/>
            <person name="Wincker P."/>
            <person name="Weissenbach J."/>
            <person name="Ehrlich S.D."/>
            <person name="Sorokin A."/>
        </authorList>
    </citation>
    <scope>NUCLEOTIDE SEQUENCE [LARGE SCALE GENOMIC DNA]</scope>
    <source>
        <strain>KBAB4</strain>
    </source>
</reference>
<organism>
    <name type="scientific">Bacillus mycoides (strain KBAB4)</name>
    <name type="common">Bacillus weihenstephanensis</name>
    <dbReference type="NCBI Taxonomy" id="315730"/>
    <lineage>
        <taxon>Bacteria</taxon>
        <taxon>Bacillati</taxon>
        <taxon>Bacillota</taxon>
        <taxon>Bacilli</taxon>
        <taxon>Bacillales</taxon>
        <taxon>Bacillaceae</taxon>
        <taxon>Bacillus</taxon>
        <taxon>Bacillus cereus group</taxon>
    </lineage>
</organism>
<sequence>MSTIITIPRSVSWKGDAIAVLNQTKLPHVTEYKTLTNIEDVWKSIIMLEVRGAPAIGIVAAFGLALAAKKYDAINIYEFQKKFNRDCNYLGTSRPTAVNLFWAIDRMRESIREITTIKEAQKILEEEALHIQQEDEMVCRSIGEHALTCFKDGDKILTICNAGSIATARYGTALAPFYIGKEKGVRLHAYACETRPVLQGGRLTTWELKQADIDVTLITDNTAAHAIRTKEINAIIVGADRIVENGDTANKIGTLNLAILAKYFGIPFYVAAPLSTFDTTKQTGAEIVIEERDETEVTKIFGKQVAPLGTPVFNPAFDVTPHELITGIITEKGILRGDYKQEITSLFEK</sequence>
<name>MTNA_BACMK</name>
<protein>
    <recommendedName>
        <fullName evidence="1">Methylthioribose-1-phosphate isomerase</fullName>
        <shortName evidence="1">M1Pi</shortName>
        <shortName evidence="1">MTR-1-P isomerase</shortName>
        <ecNumber evidence="1">5.3.1.23</ecNumber>
    </recommendedName>
    <alternativeName>
        <fullName evidence="1">S-methyl-5-thioribose-1-phosphate isomerase</fullName>
    </alternativeName>
</protein>
<proteinExistence type="inferred from homology"/>
<dbReference type="EC" id="5.3.1.23" evidence="1"/>
<dbReference type="EMBL" id="CP000903">
    <property type="protein sequence ID" value="ABY45029.1"/>
    <property type="molecule type" value="Genomic_DNA"/>
</dbReference>
<dbReference type="RefSeq" id="WP_012261635.1">
    <property type="nucleotide sequence ID" value="NC_010184.1"/>
</dbReference>
<dbReference type="SMR" id="A9VFD5"/>
<dbReference type="KEGG" id="bwe:BcerKBAB4_3861"/>
<dbReference type="eggNOG" id="COG0182">
    <property type="taxonomic scope" value="Bacteria"/>
</dbReference>
<dbReference type="HOGENOM" id="CLU_016218_1_2_9"/>
<dbReference type="UniPathway" id="UPA00904">
    <property type="reaction ID" value="UER00874"/>
</dbReference>
<dbReference type="Proteomes" id="UP000002154">
    <property type="component" value="Chromosome"/>
</dbReference>
<dbReference type="GO" id="GO:0046523">
    <property type="term" value="F:S-methyl-5-thioribose-1-phosphate isomerase activity"/>
    <property type="evidence" value="ECO:0007669"/>
    <property type="project" value="UniProtKB-UniRule"/>
</dbReference>
<dbReference type="GO" id="GO:0019509">
    <property type="term" value="P:L-methionine salvage from methylthioadenosine"/>
    <property type="evidence" value="ECO:0007669"/>
    <property type="project" value="UniProtKB-UniRule"/>
</dbReference>
<dbReference type="FunFam" id="1.20.120.420:FF:000005">
    <property type="entry name" value="Methylthioribose-1-phosphate isomerase"/>
    <property type="match status" value="1"/>
</dbReference>
<dbReference type="FunFam" id="3.40.50.10470:FF:000006">
    <property type="entry name" value="Methylthioribose-1-phosphate isomerase"/>
    <property type="match status" value="1"/>
</dbReference>
<dbReference type="Gene3D" id="1.20.120.420">
    <property type="entry name" value="translation initiation factor eif-2b, domain 1"/>
    <property type="match status" value="1"/>
</dbReference>
<dbReference type="Gene3D" id="3.40.50.10470">
    <property type="entry name" value="Translation initiation factor eif-2b, domain 2"/>
    <property type="match status" value="1"/>
</dbReference>
<dbReference type="HAMAP" id="MF_01678">
    <property type="entry name" value="Salvage_MtnA"/>
    <property type="match status" value="1"/>
</dbReference>
<dbReference type="InterPro" id="IPR000649">
    <property type="entry name" value="IF-2B-related"/>
</dbReference>
<dbReference type="InterPro" id="IPR005251">
    <property type="entry name" value="IF-M1Pi"/>
</dbReference>
<dbReference type="InterPro" id="IPR042529">
    <property type="entry name" value="IF_2B-like_C"/>
</dbReference>
<dbReference type="InterPro" id="IPR011559">
    <property type="entry name" value="Initiation_fac_2B_a/b/d"/>
</dbReference>
<dbReference type="InterPro" id="IPR027363">
    <property type="entry name" value="M1Pi_N"/>
</dbReference>
<dbReference type="InterPro" id="IPR037171">
    <property type="entry name" value="NagB/RpiA_transferase-like"/>
</dbReference>
<dbReference type="NCBIfam" id="TIGR00524">
    <property type="entry name" value="eIF-2B_rel"/>
    <property type="match status" value="1"/>
</dbReference>
<dbReference type="NCBIfam" id="NF004326">
    <property type="entry name" value="PRK05720.1"/>
    <property type="match status" value="1"/>
</dbReference>
<dbReference type="NCBIfam" id="TIGR00512">
    <property type="entry name" value="salvage_mtnA"/>
    <property type="match status" value="1"/>
</dbReference>
<dbReference type="PANTHER" id="PTHR43475">
    <property type="entry name" value="METHYLTHIORIBOSE-1-PHOSPHATE ISOMERASE"/>
    <property type="match status" value="1"/>
</dbReference>
<dbReference type="PANTHER" id="PTHR43475:SF4">
    <property type="entry name" value="METHYLTHIORIBOSE-1-PHOSPHATE ISOMERASE"/>
    <property type="match status" value="1"/>
</dbReference>
<dbReference type="Pfam" id="PF01008">
    <property type="entry name" value="IF-2B"/>
    <property type="match status" value="1"/>
</dbReference>
<dbReference type="SUPFAM" id="SSF100950">
    <property type="entry name" value="NagB/RpiA/CoA transferase-like"/>
    <property type="match status" value="1"/>
</dbReference>
<evidence type="ECO:0000255" key="1">
    <source>
        <dbReference type="HAMAP-Rule" id="MF_01678"/>
    </source>
</evidence>
<feature type="chain" id="PRO_0000357156" description="Methylthioribose-1-phosphate isomerase">
    <location>
        <begin position="1"/>
        <end position="349"/>
    </location>
</feature>
<feature type="active site" description="Proton donor" evidence="1">
    <location>
        <position position="240"/>
    </location>
</feature>
<feature type="binding site" evidence="1">
    <location>
        <begin position="51"/>
        <end position="53"/>
    </location>
    <ligand>
        <name>substrate</name>
    </ligand>
</feature>
<feature type="binding site" evidence="1">
    <location>
        <position position="94"/>
    </location>
    <ligand>
        <name>substrate</name>
    </ligand>
</feature>
<feature type="binding site" evidence="1">
    <location>
        <position position="199"/>
    </location>
    <ligand>
        <name>substrate</name>
    </ligand>
</feature>
<feature type="binding site" evidence="1">
    <location>
        <begin position="250"/>
        <end position="251"/>
    </location>
    <ligand>
        <name>substrate</name>
    </ligand>
</feature>
<feature type="site" description="Transition state stabilizer" evidence="1">
    <location>
        <position position="160"/>
    </location>
</feature>
<keyword id="KW-0028">Amino-acid biosynthesis</keyword>
<keyword id="KW-0413">Isomerase</keyword>
<keyword id="KW-0486">Methionine biosynthesis</keyword>
<comment type="function">
    <text evidence="1">Catalyzes the interconversion of methylthioribose-1-phosphate (MTR-1-P) into methylthioribulose-1-phosphate (MTRu-1-P).</text>
</comment>
<comment type="catalytic activity">
    <reaction evidence="1">
        <text>5-(methylsulfanyl)-alpha-D-ribose 1-phosphate = 5-(methylsulfanyl)-D-ribulose 1-phosphate</text>
        <dbReference type="Rhea" id="RHEA:19989"/>
        <dbReference type="ChEBI" id="CHEBI:58533"/>
        <dbReference type="ChEBI" id="CHEBI:58548"/>
        <dbReference type="EC" id="5.3.1.23"/>
    </reaction>
</comment>
<comment type="pathway">
    <text evidence="1">Amino-acid biosynthesis; L-methionine biosynthesis via salvage pathway; L-methionine from S-methyl-5-thio-alpha-D-ribose 1-phosphate: step 1/6.</text>
</comment>
<comment type="subunit">
    <text evidence="1">Homodimer.</text>
</comment>
<comment type="similarity">
    <text evidence="1">Belongs to the EIF-2B alpha/beta/delta subunits family. MtnA subfamily.</text>
</comment>
<gene>
    <name evidence="1" type="primary">mtnA</name>
    <name type="ordered locus">BcerKBAB4_3861</name>
</gene>
<accession>A9VFD5</accession>